<proteinExistence type="inferred from homology"/>
<keyword id="KW-0963">Cytoplasm</keyword>
<keyword id="KW-0620">Polyamine biosynthesis</keyword>
<keyword id="KW-0745">Spermidine biosynthesis</keyword>
<keyword id="KW-0808">Transferase</keyword>
<reference key="1">
    <citation type="submission" date="2008-02" db="EMBL/GenBank/DDBJ databases">
        <title>Complete sequence of Yersinia pseudotuberculosis YPIII.</title>
        <authorList>
            <consortium name="US DOE Joint Genome Institute"/>
            <person name="Copeland A."/>
            <person name="Lucas S."/>
            <person name="Lapidus A."/>
            <person name="Glavina del Rio T."/>
            <person name="Dalin E."/>
            <person name="Tice H."/>
            <person name="Bruce D."/>
            <person name="Goodwin L."/>
            <person name="Pitluck S."/>
            <person name="Munk A.C."/>
            <person name="Brettin T."/>
            <person name="Detter J.C."/>
            <person name="Han C."/>
            <person name="Tapia R."/>
            <person name="Schmutz J."/>
            <person name="Larimer F."/>
            <person name="Land M."/>
            <person name="Hauser L."/>
            <person name="Challacombe J.F."/>
            <person name="Green L."/>
            <person name="Lindler L.E."/>
            <person name="Nikolich M.P."/>
            <person name="Richardson P."/>
        </authorList>
    </citation>
    <scope>NUCLEOTIDE SEQUENCE [LARGE SCALE GENOMIC DNA]</scope>
    <source>
        <strain>YPIII</strain>
    </source>
</reference>
<feature type="chain" id="PRO_1000099312" description="Polyamine aminopropyltransferase">
    <location>
        <begin position="1"/>
        <end position="296"/>
    </location>
</feature>
<feature type="domain" description="PABS" evidence="1">
    <location>
        <begin position="5"/>
        <end position="238"/>
    </location>
</feature>
<feature type="active site" description="Proton acceptor" evidence="1">
    <location>
        <position position="158"/>
    </location>
</feature>
<feature type="binding site" evidence="1">
    <location>
        <position position="33"/>
    </location>
    <ligand>
        <name>S-methyl-5'-thioadenosine</name>
        <dbReference type="ChEBI" id="CHEBI:17509"/>
    </ligand>
</feature>
<feature type="binding site" evidence="1">
    <location>
        <position position="64"/>
    </location>
    <ligand>
        <name>spermidine</name>
        <dbReference type="ChEBI" id="CHEBI:57834"/>
    </ligand>
</feature>
<feature type="binding site" evidence="1">
    <location>
        <position position="88"/>
    </location>
    <ligand>
        <name>spermidine</name>
        <dbReference type="ChEBI" id="CHEBI:57834"/>
    </ligand>
</feature>
<feature type="binding site" evidence="1">
    <location>
        <position position="108"/>
    </location>
    <ligand>
        <name>S-methyl-5'-thioadenosine</name>
        <dbReference type="ChEBI" id="CHEBI:17509"/>
    </ligand>
</feature>
<feature type="binding site" evidence="1">
    <location>
        <begin position="140"/>
        <end position="141"/>
    </location>
    <ligand>
        <name>S-methyl-5'-thioadenosine</name>
        <dbReference type="ChEBI" id="CHEBI:17509"/>
    </ligand>
</feature>
<feature type="binding site" evidence="1">
    <location>
        <begin position="158"/>
        <end position="161"/>
    </location>
    <ligand>
        <name>spermidine</name>
        <dbReference type="ChEBI" id="CHEBI:57834"/>
    </ligand>
</feature>
<feature type="binding site" evidence="1">
    <location>
        <position position="165"/>
    </location>
    <ligand>
        <name>S-methyl-5'-thioadenosine</name>
        <dbReference type="ChEBI" id="CHEBI:17509"/>
    </ligand>
</feature>
<evidence type="ECO:0000255" key="1">
    <source>
        <dbReference type="HAMAP-Rule" id="MF_00198"/>
    </source>
</evidence>
<gene>
    <name evidence="1" type="primary">speE</name>
    <name type="ordered locus">YPK_3482</name>
</gene>
<organism>
    <name type="scientific">Yersinia pseudotuberculosis serotype O:3 (strain YPIII)</name>
    <dbReference type="NCBI Taxonomy" id="502800"/>
    <lineage>
        <taxon>Bacteria</taxon>
        <taxon>Pseudomonadati</taxon>
        <taxon>Pseudomonadota</taxon>
        <taxon>Gammaproteobacteria</taxon>
        <taxon>Enterobacterales</taxon>
        <taxon>Yersiniaceae</taxon>
        <taxon>Yersinia</taxon>
    </lineage>
</organism>
<dbReference type="EC" id="2.5.1.16" evidence="1"/>
<dbReference type="EMBL" id="CP000950">
    <property type="protein sequence ID" value="ACA69749.1"/>
    <property type="molecule type" value="Genomic_DNA"/>
</dbReference>
<dbReference type="RefSeq" id="WP_012304574.1">
    <property type="nucleotide sequence ID" value="NZ_CP009792.1"/>
</dbReference>
<dbReference type="SMR" id="B1JK45"/>
<dbReference type="KEGG" id="ypy:YPK_3482"/>
<dbReference type="PATRIC" id="fig|502800.11.peg.4224"/>
<dbReference type="UniPathway" id="UPA00248">
    <property type="reaction ID" value="UER00314"/>
</dbReference>
<dbReference type="GO" id="GO:0005829">
    <property type="term" value="C:cytosol"/>
    <property type="evidence" value="ECO:0007669"/>
    <property type="project" value="TreeGrafter"/>
</dbReference>
<dbReference type="GO" id="GO:0004766">
    <property type="term" value="F:spermidine synthase activity"/>
    <property type="evidence" value="ECO:0007669"/>
    <property type="project" value="UniProtKB-UniRule"/>
</dbReference>
<dbReference type="GO" id="GO:0008295">
    <property type="term" value="P:spermidine biosynthetic process"/>
    <property type="evidence" value="ECO:0007669"/>
    <property type="project" value="UniProtKB-UniRule"/>
</dbReference>
<dbReference type="CDD" id="cd02440">
    <property type="entry name" value="AdoMet_MTases"/>
    <property type="match status" value="1"/>
</dbReference>
<dbReference type="FunFam" id="2.30.140.10:FF:000002">
    <property type="entry name" value="Polyamine aminopropyltransferase"/>
    <property type="match status" value="1"/>
</dbReference>
<dbReference type="FunFam" id="3.40.50.150:FF:000026">
    <property type="entry name" value="Polyamine aminopropyltransferase"/>
    <property type="match status" value="1"/>
</dbReference>
<dbReference type="Gene3D" id="2.30.140.10">
    <property type="entry name" value="Spermidine synthase, tetramerisation domain"/>
    <property type="match status" value="1"/>
</dbReference>
<dbReference type="Gene3D" id="3.40.50.150">
    <property type="entry name" value="Vaccinia Virus protein VP39"/>
    <property type="match status" value="1"/>
</dbReference>
<dbReference type="HAMAP" id="MF_00198">
    <property type="entry name" value="Spermidine_synth"/>
    <property type="match status" value="1"/>
</dbReference>
<dbReference type="InterPro" id="IPR030374">
    <property type="entry name" value="PABS"/>
</dbReference>
<dbReference type="InterPro" id="IPR030373">
    <property type="entry name" value="PABS_CS"/>
</dbReference>
<dbReference type="InterPro" id="IPR029063">
    <property type="entry name" value="SAM-dependent_MTases_sf"/>
</dbReference>
<dbReference type="InterPro" id="IPR001045">
    <property type="entry name" value="Spermi_synthase"/>
</dbReference>
<dbReference type="InterPro" id="IPR035246">
    <property type="entry name" value="Spermidine_synt_N"/>
</dbReference>
<dbReference type="InterPro" id="IPR037163">
    <property type="entry name" value="Spermidine_synt_N_sf"/>
</dbReference>
<dbReference type="NCBIfam" id="NF037959">
    <property type="entry name" value="MFS_SpdSyn"/>
    <property type="match status" value="1"/>
</dbReference>
<dbReference type="NCBIfam" id="NF002010">
    <property type="entry name" value="PRK00811.1"/>
    <property type="match status" value="1"/>
</dbReference>
<dbReference type="NCBIfam" id="TIGR00417">
    <property type="entry name" value="speE"/>
    <property type="match status" value="1"/>
</dbReference>
<dbReference type="PANTHER" id="PTHR11558:SF11">
    <property type="entry name" value="SPERMIDINE SYNTHASE"/>
    <property type="match status" value="1"/>
</dbReference>
<dbReference type="PANTHER" id="PTHR11558">
    <property type="entry name" value="SPERMIDINE/SPERMINE SYNTHASE"/>
    <property type="match status" value="1"/>
</dbReference>
<dbReference type="Pfam" id="PF17284">
    <property type="entry name" value="Spermine_synt_N"/>
    <property type="match status" value="1"/>
</dbReference>
<dbReference type="Pfam" id="PF01564">
    <property type="entry name" value="Spermine_synth"/>
    <property type="match status" value="1"/>
</dbReference>
<dbReference type="SUPFAM" id="SSF53335">
    <property type="entry name" value="S-adenosyl-L-methionine-dependent methyltransferases"/>
    <property type="match status" value="1"/>
</dbReference>
<dbReference type="PROSITE" id="PS01330">
    <property type="entry name" value="PABS_1"/>
    <property type="match status" value="1"/>
</dbReference>
<dbReference type="PROSITE" id="PS51006">
    <property type="entry name" value="PABS_2"/>
    <property type="match status" value="1"/>
</dbReference>
<name>SPEE_YERPY</name>
<sequence>MSQKELWYETLHANFGQYFSVENVLYREKTEHQDLVIFENPELGRVMALDGVVQTTERDEFIYHEMMTHVPLLAHGQAKKVLIIGGGDGAMLREVSRHKNIEQITMVEIDAGVVEFCRQYLPNHSAGAYDDPRFKLVIDDGVNFVNQTTEKFDVIISDCTDPIGPGESLFTSVFYEGCARSLNEGGIFVAQNGVCFLQQDEAVNSHNKLSHYFSDVSFYQAAIPTYYGGIMTFAWATQNPALRQLDLATLQNRFAQAGLACRYYNPAIHVGSFALPQYLLDALTTIPKVIGLDSSE</sequence>
<protein>
    <recommendedName>
        <fullName evidence="1">Polyamine aminopropyltransferase</fullName>
    </recommendedName>
    <alternativeName>
        <fullName evidence="1">Putrescine aminopropyltransferase</fullName>
        <shortName evidence="1">PAPT</shortName>
    </alternativeName>
    <alternativeName>
        <fullName evidence="1">Spermidine synthase</fullName>
        <shortName evidence="1">SPDS</shortName>
        <shortName evidence="1">SPDSY</shortName>
        <ecNumber evidence="1">2.5.1.16</ecNumber>
    </alternativeName>
</protein>
<comment type="function">
    <text evidence="1">Catalyzes the irreversible transfer of a propylamine group from the amino donor S-adenosylmethioninamine (decarboxy-AdoMet) to putrescine (1,4-diaminobutane) to yield spermidine.</text>
</comment>
<comment type="catalytic activity">
    <reaction evidence="1">
        <text>S-adenosyl 3-(methylsulfanyl)propylamine + putrescine = S-methyl-5'-thioadenosine + spermidine + H(+)</text>
        <dbReference type="Rhea" id="RHEA:12721"/>
        <dbReference type="ChEBI" id="CHEBI:15378"/>
        <dbReference type="ChEBI" id="CHEBI:17509"/>
        <dbReference type="ChEBI" id="CHEBI:57443"/>
        <dbReference type="ChEBI" id="CHEBI:57834"/>
        <dbReference type="ChEBI" id="CHEBI:326268"/>
        <dbReference type="EC" id="2.5.1.16"/>
    </reaction>
</comment>
<comment type="pathway">
    <text evidence="1">Amine and polyamine biosynthesis; spermidine biosynthesis; spermidine from putrescine: step 1/1.</text>
</comment>
<comment type="subunit">
    <text evidence="1">Homodimer or homotetramer.</text>
</comment>
<comment type="subcellular location">
    <subcellularLocation>
        <location evidence="1">Cytoplasm</location>
    </subcellularLocation>
</comment>
<comment type="similarity">
    <text evidence="1">Belongs to the spermidine/spermine synthase family.</text>
</comment>
<accession>B1JK45</accession>